<reference key="1">
    <citation type="journal article" date="1998" name="Science">
        <title>Genome sequence of the nematode C. elegans: a platform for investigating biology.</title>
        <authorList>
            <consortium name="The C. elegans sequencing consortium"/>
        </authorList>
    </citation>
    <scope>NUCLEOTIDE SEQUENCE [LARGE SCALE GENOMIC DNA]</scope>
    <source>
        <strain>Bristol N2</strain>
    </source>
</reference>
<proteinExistence type="inferred from homology"/>
<evidence type="ECO:0000250" key="1">
    <source>
        <dbReference type="UniProtKB" id="Q9Y2W2"/>
    </source>
</evidence>
<evidence type="ECO:0000256" key="2">
    <source>
        <dbReference type="SAM" id="MobiDB-lite"/>
    </source>
</evidence>
<evidence type="ECO:0000305" key="3"/>
<evidence type="ECO:0000312" key="4">
    <source>
        <dbReference type="WormBase" id="F33H1.3"/>
    </source>
</evidence>
<feature type="chain" id="PRO_0000065320" description="WW domain-binding protein wbp-11">
    <location>
        <begin position="1"/>
        <end position="359"/>
    </location>
</feature>
<feature type="region of interest" description="Disordered" evidence="2">
    <location>
        <begin position="1"/>
        <end position="38"/>
    </location>
</feature>
<feature type="region of interest" description="Disordered" evidence="2">
    <location>
        <begin position="235"/>
        <end position="264"/>
    </location>
</feature>
<feature type="region of interest" description="Disordered" evidence="2">
    <location>
        <begin position="317"/>
        <end position="341"/>
    </location>
</feature>
<feature type="compositionally biased region" description="Basic and acidic residues" evidence="2">
    <location>
        <begin position="8"/>
        <end position="27"/>
    </location>
</feature>
<feature type="compositionally biased region" description="Basic residues" evidence="2">
    <location>
        <begin position="245"/>
        <end position="256"/>
    </location>
</feature>
<protein>
    <recommendedName>
        <fullName evidence="3">WW domain-binding protein wbp-11</fullName>
    </recommendedName>
</protein>
<organism>
    <name type="scientific">Caenorhabditis elegans</name>
    <dbReference type="NCBI Taxonomy" id="6239"/>
    <lineage>
        <taxon>Eukaryota</taxon>
        <taxon>Metazoa</taxon>
        <taxon>Ecdysozoa</taxon>
        <taxon>Nematoda</taxon>
        <taxon>Chromadorea</taxon>
        <taxon>Rhabditida</taxon>
        <taxon>Rhabditina</taxon>
        <taxon>Rhabditomorpha</taxon>
        <taxon>Rhabditoidea</taxon>
        <taxon>Rhabditidae</taxon>
        <taxon>Peloderinae</taxon>
        <taxon>Caenorhabditis</taxon>
    </lineage>
</organism>
<comment type="function">
    <text evidence="1">Activates pre-mRNA splicing (By similarity). May inhibit PP1 phosphatase activity (By similarity).</text>
</comment>
<accession>Q09556</accession>
<gene>
    <name evidence="4" type="primary">wbp-11</name>
    <name evidence="4" type="ORF">F33H1.3</name>
</gene>
<dbReference type="EMBL" id="Z48783">
    <property type="protein sequence ID" value="CAA88698.1"/>
    <property type="molecule type" value="Genomic_DNA"/>
</dbReference>
<dbReference type="PIR" id="T21705">
    <property type="entry name" value="T21705"/>
</dbReference>
<dbReference type="SMR" id="Q09556"/>
<dbReference type="BioGRID" id="39898">
    <property type="interactions" value="3"/>
</dbReference>
<dbReference type="FunCoup" id="Q09556">
    <property type="interactions" value="3152"/>
</dbReference>
<dbReference type="IntAct" id="Q09556">
    <property type="interactions" value="1"/>
</dbReference>
<dbReference type="STRING" id="6239.F33H1.3.1"/>
<dbReference type="PaxDb" id="6239-F33H1.3"/>
<dbReference type="PeptideAtlas" id="Q09556"/>
<dbReference type="EnsemblMetazoa" id="F33H1.3.1">
    <property type="protein sequence ID" value="F33H1.3.1"/>
    <property type="gene ID" value="WBGene00009364"/>
</dbReference>
<dbReference type="KEGG" id="cel:CELE_F33H1.3"/>
<dbReference type="UCSC" id="F33H1.3">
    <property type="organism name" value="c. elegans"/>
</dbReference>
<dbReference type="AGR" id="WB:WBGene00009364"/>
<dbReference type="CTD" id="174579"/>
<dbReference type="WormBase" id="F33H1.3">
    <property type="protein sequence ID" value="CE01569"/>
    <property type="gene ID" value="WBGene00009364"/>
    <property type="gene designation" value="wbp-11"/>
</dbReference>
<dbReference type="eggNOG" id="KOG4672">
    <property type="taxonomic scope" value="Eukaryota"/>
</dbReference>
<dbReference type="GeneTree" id="ENSGT00940000162350"/>
<dbReference type="HOGENOM" id="CLU_772160_0_0_1"/>
<dbReference type="InParanoid" id="Q09556"/>
<dbReference type="OMA" id="EFDIHVE"/>
<dbReference type="OrthoDB" id="10067323at2759"/>
<dbReference type="PRO" id="PR:Q09556"/>
<dbReference type="Proteomes" id="UP000001940">
    <property type="component" value="Chromosome II"/>
</dbReference>
<dbReference type="Bgee" id="WBGene00009364">
    <property type="expression patterns" value="Expressed in germ line (C elegans) and 4 other cell types or tissues"/>
</dbReference>
<dbReference type="GO" id="GO:0006396">
    <property type="term" value="P:RNA processing"/>
    <property type="evidence" value="ECO:0007669"/>
    <property type="project" value="InterPro"/>
</dbReference>
<dbReference type="InterPro" id="IPR019007">
    <property type="entry name" value="WW_dom-bd_prot_11"/>
</dbReference>
<dbReference type="Pfam" id="PF09429">
    <property type="entry name" value="Wbp11"/>
    <property type="match status" value="1"/>
</dbReference>
<sequence length="359" mass="40880">MPSISKTKSGERYRAPTDQARKMDRKKENKRNKKDRQQIRQAMAKYCNLDETTSKLLALERQILGLDPQPFHIDVLRKKQKVLTDSINKRRMTLQQGKEDAELKKFNDKINAYQSDCQKLAVLAQQARLAREADPDMIPLPMGDVSTAGPERNNQLLAPAMIKRKVEFQLPPRPVRVAGQKPPGPPCGLAPNFSDSEEEEEEVHDDHYDDIDLAPVPIPEFDNPYQPIHRNYGPPSSYNSMPTRMPHHHHHHHPHASSHYNPMGFQNHHEEAVISSAPQINRSNEPAAPATLSAAPELRNLRRETVKLVPAQLLRRPGDNKTIVPRQAAPVQRRPEVQKQAKNTDEAYNDFMKELDGLI</sequence>
<name>WBP11_CAEEL</name>
<keyword id="KW-1185">Reference proteome</keyword>